<protein>
    <recommendedName>
        <fullName evidence="1">Peptide chain release factor 1</fullName>
        <shortName evidence="1">RF-1</shortName>
    </recommendedName>
</protein>
<feature type="chain" id="PRO_1000004882" description="Peptide chain release factor 1">
    <location>
        <begin position="1"/>
        <end position="358"/>
    </location>
</feature>
<feature type="modified residue" description="N5-methylglutamine" evidence="1">
    <location>
        <position position="233"/>
    </location>
</feature>
<name>RF1_CLOBL</name>
<organism>
    <name type="scientific">Clostridium botulinum (strain Langeland / NCTC 10281 / Type F)</name>
    <dbReference type="NCBI Taxonomy" id="441772"/>
    <lineage>
        <taxon>Bacteria</taxon>
        <taxon>Bacillati</taxon>
        <taxon>Bacillota</taxon>
        <taxon>Clostridia</taxon>
        <taxon>Eubacteriales</taxon>
        <taxon>Clostridiaceae</taxon>
        <taxon>Clostridium</taxon>
    </lineage>
</organism>
<sequence>MLERLNFIENKYEELSNKISDPSVMANQKEWQKLCKEHADLEIIVNTYREYKKAQEDLESDKEMLKEESDKELREMAQEEIKELTLKLEDLERELTILLLPKDPNDDKDVFIEIRAGAGGEEAALFASNLLRMYTRYAERKNWKVETMSLNATDIGGFKEVTVAIKGKGAYSRLKYESGVHRVQRVPDTESSGRIHTSTATVAVLPEVDDVDININANDLRIDVYRASGHGGQCVNTTDSAVRITHLPTGLVVTCQDEKSQLKNKEKAMKVLKARLFEAAEAERAASIAEDRKSQVGTGDRSERIRTYNYPQGRITDHRIGLTLYKLETFLDGDIDEVIEALVTEDQAEKMKDLGRVN</sequence>
<comment type="function">
    <text evidence="1">Peptide chain release factor 1 directs the termination of translation in response to the peptide chain termination codons UAG and UAA.</text>
</comment>
<comment type="subcellular location">
    <subcellularLocation>
        <location evidence="1">Cytoplasm</location>
    </subcellularLocation>
</comment>
<comment type="PTM">
    <text evidence="1">Methylated by PrmC. Methylation increases the termination efficiency of RF1.</text>
</comment>
<comment type="similarity">
    <text evidence="1">Belongs to the prokaryotic/mitochondrial release factor family.</text>
</comment>
<keyword id="KW-0963">Cytoplasm</keyword>
<keyword id="KW-0488">Methylation</keyword>
<keyword id="KW-0648">Protein biosynthesis</keyword>
<proteinExistence type="inferred from homology"/>
<evidence type="ECO:0000255" key="1">
    <source>
        <dbReference type="HAMAP-Rule" id="MF_00093"/>
    </source>
</evidence>
<reference key="1">
    <citation type="submission" date="2007-06" db="EMBL/GenBank/DDBJ databases">
        <authorList>
            <person name="Brinkac L.M."/>
            <person name="Daugherty S."/>
            <person name="Dodson R.J."/>
            <person name="Madupu R."/>
            <person name="Brown J.L."/>
            <person name="Bruce D."/>
            <person name="Detter C."/>
            <person name="Munk C."/>
            <person name="Smith L.A."/>
            <person name="Smith T.J."/>
            <person name="White O."/>
            <person name="Brettin T.S."/>
        </authorList>
    </citation>
    <scope>NUCLEOTIDE SEQUENCE [LARGE SCALE GENOMIC DNA]</scope>
    <source>
        <strain>Langeland / NCTC 10281 / Type F</strain>
    </source>
</reference>
<gene>
    <name evidence="1" type="primary">prfA</name>
    <name type="ordered locus">CLI_0194</name>
</gene>
<accession>A7G9P2</accession>
<dbReference type="EMBL" id="CP000728">
    <property type="protein sequence ID" value="ABS40961.1"/>
    <property type="molecule type" value="Genomic_DNA"/>
</dbReference>
<dbReference type="SMR" id="A7G9P2"/>
<dbReference type="KEGG" id="cbf:CLI_0194"/>
<dbReference type="HOGENOM" id="CLU_036856_0_1_9"/>
<dbReference type="Proteomes" id="UP000002410">
    <property type="component" value="Chromosome"/>
</dbReference>
<dbReference type="GO" id="GO:0005737">
    <property type="term" value="C:cytoplasm"/>
    <property type="evidence" value="ECO:0007669"/>
    <property type="project" value="UniProtKB-SubCell"/>
</dbReference>
<dbReference type="GO" id="GO:0016149">
    <property type="term" value="F:translation release factor activity, codon specific"/>
    <property type="evidence" value="ECO:0007669"/>
    <property type="project" value="UniProtKB-UniRule"/>
</dbReference>
<dbReference type="FunFam" id="3.30.160.20:FF:000004">
    <property type="entry name" value="Peptide chain release factor 1"/>
    <property type="match status" value="1"/>
</dbReference>
<dbReference type="FunFam" id="3.30.70.1660:FF:000002">
    <property type="entry name" value="Peptide chain release factor 1"/>
    <property type="match status" value="1"/>
</dbReference>
<dbReference type="FunFam" id="3.30.70.1660:FF:000004">
    <property type="entry name" value="Peptide chain release factor 1"/>
    <property type="match status" value="1"/>
</dbReference>
<dbReference type="Gene3D" id="3.30.160.20">
    <property type="match status" value="1"/>
</dbReference>
<dbReference type="Gene3D" id="3.30.70.1660">
    <property type="match status" value="1"/>
</dbReference>
<dbReference type="Gene3D" id="6.10.140.1950">
    <property type="match status" value="1"/>
</dbReference>
<dbReference type="HAMAP" id="MF_00093">
    <property type="entry name" value="Rel_fac_1"/>
    <property type="match status" value="1"/>
</dbReference>
<dbReference type="InterPro" id="IPR005139">
    <property type="entry name" value="PCRF"/>
</dbReference>
<dbReference type="InterPro" id="IPR000352">
    <property type="entry name" value="Pep_chain_release_fac_I"/>
</dbReference>
<dbReference type="InterPro" id="IPR045853">
    <property type="entry name" value="Pep_chain_release_fac_I_sf"/>
</dbReference>
<dbReference type="InterPro" id="IPR050057">
    <property type="entry name" value="Prokaryotic/Mito_RF"/>
</dbReference>
<dbReference type="InterPro" id="IPR004373">
    <property type="entry name" value="RF-1"/>
</dbReference>
<dbReference type="NCBIfam" id="TIGR00019">
    <property type="entry name" value="prfA"/>
    <property type="match status" value="1"/>
</dbReference>
<dbReference type="NCBIfam" id="NF001859">
    <property type="entry name" value="PRK00591.1"/>
    <property type="match status" value="1"/>
</dbReference>
<dbReference type="PANTHER" id="PTHR43804">
    <property type="entry name" value="LD18447P"/>
    <property type="match status" value="1"/>
</dbReference>
<dbReference type="PANTHER" id="PTHR43804:SF7">
    <property type="entry name" value="LD18447P"/>
    <property type="match status" value="1"/>
</dbReference>
<dbReference type="Pfam" id="PF03462">
    <property type="entry name" value="PCRF"/>
    <property type="match status" value="1"/>
</dbReference>
<dbReference type="Pfam" id="PF00472">
    <property type="entry name" value="RF-1"/>
    <property type="match status" value="1"/>
</dbReference>
<dbReference type="SMART" id="SM00937">
    <property type="entry name" value="PCRF"/>
    <property type="match status" value="1"/>
</dbReference>
<dbReference type="SUPFAM" id="SSF75620">
    <property type="entry name" value="Release factor"/>
    <property type="match status" value="1"/>
</dbReference>
<dbReference type="PROSITE" id="PS00745">
    <property type="entry name" value="RF_PROK_I"/>
    <property type="match status" value="1"/>
</dbReference>